<evidence type="ECO:0000255" key="1">
    <source>
        <dbReference type="HAMAP-Rule" id="MF_00652"/>
    </source>
</evidence>
<dbReference type="EMBL" id="CP001050">
    <property type="protein sequence ID" value="ACF29324.1"/>
    <property type="molecule type" value="Genomic_DNA"/>
</dbReference>
<dbReference type="SMR" id="B4RKH3"/>
<dbReference type="KEGG" id="ngk:NGK_0633"/>
<dbReference type="HOGENOM" id="CLU_061989_0_0_4"/>
<dbReference type="Proteomes" id="UP000002564">
    <property type="component" value="Chromosome"/>
</dbReference>
<dbReference type="GO" id="GO:0005829">
    <property type="term" value="C:cytosol"/>
    <property type="evidence" value="ECO:0007669"/>
    <property type="project" value="TreeGrafter"/>
</dbReference>
<dbReference type="GO" id="GO:0033194">
    <property type="term" value="P:response to hydroperoxide"/>
    <property type="evidence" value="ECO:0007669"/>
    <property type="project" value="TreeGrafter"/>
</dbReference>
<dbReference type="HAMAP" id="MF_00652">
    <property type="entry name" value="UPF0246"/>
    <property type="match status" value="1"/>
</dbReference>
<dbReference type="InterPro" id="IPR005583">
    <property type="entry name" value="YaaA"/>
</dbReference>
<dbReference type="NCBIfam" id="NF002541">
    <property type="entry name" value="PRK02101.1-1"/>
    <property type="match status" value="1"/>
</dbReference>
<dbReference type="NCBIfam" id="NF002542">
    <property type="entry name" value="PRK02101.1-3"/>
    <property type="match status" value="1"/>
</dbReference>
<dbReference type="PANTHER" id="PTHR30283:SF4">
    <property type="entry name" value="PEROXIDE STRESS RESISTANCE PROTEIN YAAA"/>
    <property type="match status" value="1"/>
</dbReference>
<dbReference type="PANTHER" id="PTHR30283">
    <property type="entry name" value="PEROXIDE STRESS RESPONSE PROTEIN YAAA"/>
    <property type="match status" value="1"/>
</dbReference>
<dbReference type="Pfam" id="PF03883">
    <property type="entry name" value="H2O2_YaaD"/>
    <property type="match status" value="1"/>
</dbReference>
<protein>
    <recommendedName>
        <fullName evidence="1">UPF0246 protein NGK_0633</fullName>
    </recommendedName>
</protein>
<name>Y633_NEIG2</name>
<accession>B4RKH3</accession>
<comment type="similarity">
    <text evidence="1">Belongs to the UPF0246 family.</text>
</comment>
<reference key="1">
    <citation type="journal article" date="2008" name="J. Bacteriol.">
        <title>Complete genome sequence of Neisseria gonorrhoeae NCCP11945.</title>
        <authorList>
            <person name="Chung G.T."/>
            <person name="Yoo J.S."/>
            <person name="Oh H.B."/>
            <person name="Lee Y.S."/>
            <person name="Cha S.H."/>
            <person name="Kim S.J."/>
            <person name="Yoo C.K."/>
        </authorList>
    </citation>
    <scope>NUCLEOTIDE SEQUENCE [LARGE SCALE GENOMIC DNA]</scope>
    <source>
        <strain>NCCP11945</strain>
    </source>
</reference>
<sequence length="259" mass="29765">MFFVLSPAKNLNEKDPCPVSEFTQPDLLAESEILMRQLRELAPQQIAELMHVSDKIALLNAERNAAWHTPFTPENAKQAVFMFNGDVYEGMDANTLNTNQIQYLQNHVRLLSGLYGLMRPLDLMQPYRLEMGTAFANLRGKNLYEFWGDIITNLLNDTLAQAGSNTLVNLASQEYFKSVNTKKLRARLITPIFKDEKNGKYKIISFYAKRARGLMVRYAAEHNITDPEMLKNFNYEGYAFNDAASNESEWVFMRSEQIK</sequence>
<feature type="chain" id="PRO_1000131129" description="UPF0246 protein NGK_0633">
    <location>
        <begin position="1"/>
        <end position="259"/>
    </location>
</feature>
<proteinExistence type="inferred from homology"/>
<gene>
    <name type="ordered locus">NGK_0633</name>
</gene>
<organism>
    <name type="scientific">Neisseria gonorrhoeae (strain NCCP11945)</name>
    <dbReference type="NCBI Taxonomy" id="521006"/>
    <lineage>
        <taxon>Bacteria</taxon>
        <taxon>Pseudomonadati</taxon>
        <taxon>Pseudomonadota</taxon>
        <taxon>Betaproteobacteria</taxon>
        <taxon>Neisseriales</taxon>
        <taxon>Neisseriaceae</taxon>
        <taxon>Neisseria</taxon>
    </lineage>
</organism>